<accession>B0V8J1</accession>
<comment type="function">
    <text evidence="1">Specifically methylates guanosine-37 in various tRNAs.</text>
</comment>
<comment type="catalytic activity">
    <reaction evidence="1">
        <text>guanosine(37) in tRNA + S-adenosyl-L-methionine = N(1)-methylguanosine(37) in tRNA + S-adenosyl-L-homocysteine + H(+)</text>
        <dbReference type="Rhea" id="RHEA:36899"/>
        <dbReference type="Rhea" id="RHEA-COMP:10145"/>
        <dbReference type="Rhea" id="RHEA-COMP:10147"/>
        <dbReference type="ChEBI" id="CHEBI:15378"/>
        <dbReference type="ChEBI" id="CHEBI:57856"/>
        <dbReference type="ChEBI" id="CHEBI:59789"/>
        <dbReference type="ChEBI" id="CHEBI:73542"/>
        <dbReference type="ChEBI" id="CHEBI:74269"/>
        <dbReference type="EC" id="2.1.1.228"/>
    </reaction>
</comment>
<comment type="subunit">
    <text evidence="1">Homodimer.</text>
</comment>
<comment type="subcellular location">
    <subcellularLocation>
        <location evidence="1">Cytoplasm</location>
    </subcellularLocation>
</comment>
<comment type="similarity">
    <text evidence="1">Belongs to the RNA methyltransferase TrmD family.</text>
</comment>
<name>TRMD_ACIBY</name>
<gene>
    <name evidence="1" type="primary">trmD</name>
    <name type="ordered locus">ABAYE0323</name>
</gene>
<reference key="1">
    <citation type="journal article" date="2008" name="PLoS ONE">
        <title>Comparative analysis of Acinetobacters: three genomes for three lifestyles.</title>
        <authorList>
            <person name="Vallenet D."/>
            <person name="Nordmann P."/>
            <person name="Barbe V."/>
            <person name="Poirel L."/>
            <person name="Mangenot S."/>
            <person name="Bataille E."/>
            <person name="Dossat C."/>
            <person name="Gas S."/>
            <person name="Kreimeyer A."/>
            <person name="Lenoble P."/>
            <person name="Oztas S."/>
            <person name="Poulain J."/>
            <person name="Segurens B."/>
            <person name="Robert C."/>
            <person name="Abergel C."/>
            <person name="Claverie J.-M."/>
            <person name="Raoult D."/>
            <person name="Medigue C."/>
            <person name="Weissenbach J."/>
            <person name="Cruveiller S."/>
        </authorList>
    </citation>
    <scope>NUCLEOTIDE SEQUENCE [LARGE SCALE GENOMIC DNA]</scope>
    <source>
        <strain>AYE</strain>
    </source>
</reference>
<dbReference type="EC" id="2.1.1.228" evidence="1"/>
<dbReference type="EMBL" id="CU459141">
    <property type="protein sequence ID" value="CAM85301.1"/>
    <property type="molecule type" value="Genomic_DNA"/>
</dbReference>
<dbReference type="RefSeq" id="WP_000464595.1">
    <property type="nucleotide sequence ID" value="NZ_JBDGFB010000011.1"/>
</dbReference>
<dbReference type="PDB" id="7MYQ">
    <property type="method" value="X-ray"/>
    <property type="resolution" value="2.55 A"/>
    <property type="chains" value="A/B=2-246"/>
</dbReference>
<dbReference type="PDB" id="7MYS">
    <property type="method" value="X-ray"/>
    <property type="resolution" value="2.40 A"/>
    <property type="chains" value="A/B=2-246"/>
</dbReference>
<dbReference type="PDBsum" id="7MYQ"/>
<dbReference type="PDBsum" id="7MYS"/>
<dbReference type="SMR" id="B0V8J1"/>
<dbReference type="EnsemblBacteria" id="CAM85301">
    <property type="protein sequence ID" value="CAM85301"/>
    <property type="gene ID" value="ABAYE0323"/>
</dbReference>
<dbReference type="KEGG" id="aby:ABAYE0323"/>
<dbReference type="HOGENOM" id="CLU_047363_0_1_6"/>
<dbReference type="GO" id="GO:0005829">
    <property type="term" value="C:cytosol"/>
    <property type="evidence" value="ECO:0007669"/>
    <property type="project" value="TreeGrafter"/>
</dbReference>
<dbReference type="GO" id="GO:0052906">
    <property type="term" value="F:tRNA (guanine(37)-N1)-methyltransferase activity"/>
    <property type="evidence" value="ECO:0007669"/>
    <property type="project" value="UniProtKB-UniRule"/>
</dbReference>
<dbReference type="GO" id="GO:0002939">
    <property type="term" value="P:tRNA N1-guanine methylation"/>
    <property type="evidence" value="ECO:0007669"/>
    <property type="project" value="TreeGrafter"/>
</dbReference>
<dbReference type="CDD" id="cd18080">
    <property type="entry name" value="TrmD-like"/>
    <property type="match status" value="1"/>
</dbReference>
<dbReference type="FunFam" id="1.10.1270.20:FF:000001">
    <property type="entry name" value="tRNA (guanine-N(1)-)-methyltransferase"/>
    <property type="match status" value="1"/>
</dbReference>
<dbReference type="FunFam" id="3.40.1280.10:FF:000001">
    <property type="entry name" value="tRNA (guanine-N(1)-)-methyltransferase"/>
    <property type="match status" value="1"/>
</dbReference>
<dbReference type="Gene3D" id="3.40.1280.10">
    <property type="match status" value="1"/>
</dbReference>
<dbReference type="Gene3D" id="1.10.1270.20">
    <property type="entry name" value="tRNA(m1g37)methyltransferase, domain 2"/>
    <property type="match status" value="1"/>
</dbReference>
<dbReference type="HAMAP" id="MF_00605">
    <property type="entry name" value="TrmD"/>
    <property type="match status" value="1"/>
</dbReference>
<dbReference type="InterPro" id="IPR029028">
    <property type="entry name" value="Alpha/beta_knot_MTases"/>
</dbReference>
<dbReference type="InterPro" id="IPR023148">
    <property type="entry name" value="tRNA_m1G_MeTrfase_C_sf"/>
</dbReference>
<dbReference type="InterPro" id="IPR002649">
    <property type="entry name" value="tRNA_m1G_MeTrfase_TrmD"/>
</dbReference>
<dbReference type="InterPro" id="IPR029026">
    <property type="entry name" value="tRNA_m1G_MTases_N"/>
</dbReference>
<dbReference type="InterPro" id="IPR016009">
    <property type="entry name" value="tRNA_MeTrfase_TRMD/TRM10"/>
</dbReference>
<dbReference type="NCBIfam" id="NF000648">
    <property type="entry name" value="PRK00026.1"/>
    <property type="match status" value="1"/>
</dbReference>
<dbReference type="NCBIfam" id="TIGR00088">
    <property type="entry name" value="trmD"/>
    <property type="match status" value="1"/>
</dbReference>
<dbReference type="PANTHER" id="PTHR46417">
    <property type="entry name" value="TRNA (GUANINE-N(1)-)-METHYLTRANSFERASE"/>
    <property type="match status" value="1"/>
</dbReference>
<dbReference type="PANTHER" id="PTHR46417:SF1">
    <property type="entry name" value="TRNA (GUANINE-N(1)-)-METHYLTRANSFERASE"/>
    <property type="match status" value="1"/>
</dbReference>
<dbReference type="Pfam" id="PF01746">
    <property type="entry name" value="tRNA_m1G_MT"/>
    <property type="match status" value="1"/>
</dbReference>
<dbReference type="PIRSF" id="PIRSF000386">
    <property type="entry name" value="tRNA_mtase"/>
    <property type="match status" value="1"/>
</dbReference>
<dbReference type="SUPFAM" id="SSF75217">
    <property type="entry name" value="alpha/beta knot"/>
    <property type="match status" value="1"/>
</dbReference>
<feature type="chain" id="PRO_1000130123" description="tRNA (guanine-N(1)-)-methyltransferase">
    <location>
        <begin position="1"/>
        <end position="246"/>
    </location>
</feature>
<feature type="binding site" evidence="1">
    <location>
        <position position="117"/>
    </location>
    <ligand>
        <name>S-adenosyl-L-methionine</name>
        <dbReference type="ChEBI" id="CHEBI:59789"/>
    </ligand>
</feature>
<feature type="binding site" evidence="1">
    <location>
        <begin position="137"/>
        <end position="142"/>
    </location>
    <ligand>
        <name>S-adenosyl-L-methionine</name>
        <dbReference type="ChEBI" id="CHEBI:59789"/>
    </ligand>
</feature>
<feature type="strand" evidence="2">
    <location>
        <begin position="2"/>
        <end position="6"/>
    </location>
</feature>
<feature type="helix" evidence="2">
    <location>
        <begin position="10"/>
        <end position="13"/>
    </location>
</feature>
<feature type="helix" evidence="2">
    <location>
        <begin position="14"/>
        <end position="17"/>
    </location>
</feature>
<feature type="helix" evidence="2">
    <location>
        <begin position="20"/>
        <end position="27"/>
    </location>
</feature>
<feature type="strand" evidence="2">
    <location>
        <begin position="30"/>
        <end position="36"/>
    </location>
</feature>
<feature type="helix" evidence="2">
    <location>
        <begin position="38"/>
        <end position="41"/>
    </location>
</feature>
<feature type="turn" evidence="2">
    <location>
        <begin position="44"/>
        <end position="47"/>
    </location>
</feature>
<feature type="helix" evidence="2">
    <location>
        <begin position="64"/>
        <end position="80"/>
    </location>
</feature>
<feature type="strand" evidence="2">
    <location>
        <begin position="88"/>
        <end position="91"/>
    </location>
</feature>
<feature type="strand" evidence="2">
    <location>
        <begin position="95"/>
        <end position="97"/>
    </location>
</feature>
<feature type="helix" evidence="2">
    <location>
        <begin position="100"/>
        <end position="107"/>
    </location>
</feature>
<feature type="strand" evidence="2">
    <location>
        <begin position="109"/>
        <end position="115"/>
    </location>
</feature>
<feature type="helix" evidence="2">
    <location>
        <begin position="124"/>
        <end position="130"/>
    </location>
</feature>
<feature type="strand" evidence="2">
    <location>
        <begin position="132"/>
        <end position="140"/>
    </location>
</feature>
<feature type="helix" evidence="2">
    <location>
        <begin position="146"/>
        <end position="157"/>
    </location>
</feature>
<feature type="turn" evidence="2">
    <location>
        <begin position="174"/>
        <end position="177"/>
    </location>
</feature>
<feature type="strand" evidence="2">
    <location>
        <begin position="189"/>
        <end position="191"/>
    </location>
</feature>
<feature type="helix" evidence="2">
    <location>
        <begin position="198"/>
        <end position="202"/>
    </location>
</feature>
<feature type="helix" evidence="2">
    <location>
        <begin position="205"/>
        <end position="223"/>
    </location>
</feature>
<feature type="helix" evidence="2">
    <location>
        <begin position="225"/>
        <end position="229"/>
    </location>
</feature>
<feature type="helix" evidence="2">
    <location>
        <begin position="235"/>
        <end position="243"/>
    </location>
</feature>
<evidence type="ECO:0000255" key="1">
    <source>
        <dbReference type="HAMAP-Rule" id="MF_00605"/>
    </source>
</evidence>
<evidence type="ECO:0007829" key="2">
    <source>
        <dbReference type="PDB" id="7MYS"/>
    </source>
</evidence>
<protein>
    <recommendedName>
        <fullName evidence="1">tRNA (guanine-N(1)-)-methyltransferase</fullName>
        <ecNumber evidence="1">2.1.1.228</ecNumber>
    </recommendedName>
    <alternativeName>
        <fullName evidence="1">M1G-methyltransferase</fullName>
    </alternativeName>
    <alternativeName>
        <fullName evidence="1">tRNA [GM37] methyltransferase</fullName>
    </alternativeName>
</protein>
<organism>
    <name type="scientific">Acinetobacter baumannii (strain AYE)</name>
    <dbReference type="NCBI Taxonomy" id="509173"/>
    <lineage>
        <taxon>Bacteria</taxon>
        <taxon>Pseudomonadati</taxon>
        <taxon>Pseudomonadota</taxon>
        <taxon>Gammaproteobacteria</taxon>
        <taxon>Moraxellales</taxon>
        <taxon>Moraxellaceae</taxon>
        <taxon>Acinetobacter</taxon>
        <taxon>Acinetobacter calcoaceticus/baumannii complex</taxon>
    </lineage>
</organism>
<proteinExistence type="evidence at protein level"/>
<sequence>MFFAVITLFPEMFDAITAYGISGRAAKRDIVQVTCINPRDFAEGNYRRVDERPFGGGPGMVMMAEPLAKAINHAKQLASRAGCVHVPVVYMSPQGKTLNEQAVQQFVDYDGLIVLCGRYEGVDERLIQHYVDQEWSIGDYVLSGGELPAMVLLDSIIRRLPNVMSDEQSAIQDSFVDGLLDCPQYTKPDQFEGLDVPEILKSGHHANIEKWRFLQRYQRTLERRPELIEQVTLTKQQKKWLSDEQG</sequence>
<keyword id="KW-0002">3D-structure</keyword>
<keyword id="KW-0963">Cytoplasm</keyword>
<keyword id="KW-0489">Methyltransferase</keyword>
<keyword id="KW-0949">S-adenosyl-L-methionine</keyword>
<keyword id="KW-0808">Transferase</keyword>
<keyword id="KW-0819">tRNA processing</keyword>